<organism>
    <name type="scientific">Bacillus cereus (strain AH820)</name>
    <dbReference type="NCBI Taxonomy" id="405535"/>
    <lineage>
        <taxon>Bacteria</taxon>
        <taxon>Bacillati</taxon>
        <taxon>Bacillota</taxon>
        <taxon>Bacilli</taxon>
        <taxon>Bacillales</taxon>
        <taxon>Bacillaceae</taxon>
        <taxon>Bacillus</taxon>
        <taxon>Bacillus cereus group</taxon>
    </lineage>
</organism>
<sequence>MDLSVKSEENVEYMVEAIKEKLRMVNAGAMRAASFNEEMYEDLRDIYEHVMKRETFSISEMQAITEELGTLIKK</sequence>
<protein>
    <recommendedName>
        <fullName evidence="1">UPF0435 protein BCAH820_0450</fullName>
    </recommendedName>
</protein>
<accession>B7JNA2</accession>
<gene>
    <name type="ordered locus">BCAH820_0450</name>
</gene>
<name>Y450_BACC0</name>
<comment type="similarity">
    <text evidence="1">Belongs to the UPF0435 family.</text>
</comment>
<evidence type="ECO:0000255" key="1">
    <source>
        <dbReference type="HAMAP-Rule" id="MF_00829"/>
    </source>
</evidence>
<proteinExistence type="inferred from homology"/>
<dbReference type="EMBL" id="CP001283">
    <property type="protein sequence ID" value="ACK89776.1"/>
    <property type="molecule type" value="Genomic_DNA"/>
</dbReference>
<dbReference type="RefSeq" id="WP_000366197.1">
    <property type="nucleotide sequence ID" value="NC_011773.1"/>
</dbReference>
<dbReference type="SMR" id="B7JNA2"/>
<dbReference type="KEGG" id="bcu:BCAH820_0450"/>
<dbReference type="HOGENOM" id="CLU_199533_1_0_9"/>
<dbReference type="Proteomes" id="UP000001363">
    <property type="component" value="Chromosome"/>
</dbReference>
<dbReference type="HAMAP" id="MF_00829">
    <property type="entry name" value="UPF0435"/>
    <property type="match status" value="1"/>
</dbReference>
<dbReference type="InterPro" id="IPR009507">
    <property type="entry name" value="UPF0435"/>
</dbReference>
<dbReference type="Pfam" id="PF06569">
    <property type="entry name" value="DUF1128"/>
    <property type="match status" value="1"/>
</dbReference>
<reference key="1">
    <citation type="submission" date="2008-10" db="EMBL/GenBank/DDBJ databases">
        <title>Genome sequence of Bacillus cereus AH820.</title>
        <authorList>
            <person name="Dodson R.J."/>
            <person name="Durkin A.S."/>
            <person name="Rosovitz M.J."/>
            <person name="Rasko D.A."/>
            <person name="Hoffmaster A."/>
            <person name="Ravel J."/>
            <person name="Sutton G."/>
        </authorList>
    </citation>
    <scope>NUCLEOTIDE SEQUENCE [LARGE SCALE GENOMIC DNA]</scope>
    <source>
        <strain>AH820</strain>
    </source>
</reference>
<feature type="chain" id="PRO_1000200908" description="UPF0435 protein BCAH820_0450">
    <location>
        <begin position="1"/>
        <end position="74"/>
    </location>
</feature>